<protein>
    <recommendedName>
        <fullName evidence="5">Transcription termination factor MTERF15, mitochondrial</fullName>
    </recommendedName>
    <alternativeName>
        <fullName evidence="4">Mitochondrial transcription termination factor 15</fullName>
    </alternativeName>
</protein>
<evidence type="ECO:0000255" key="1"/>
<evidence type="ECO:0000269" key="2">
    <source>
    </source>
</evidence>
<evidence type="ECO:0000269" key="3">
    <source>
    </source>
</evidence>
<evidence type="ECO:0000303" key="4">
    <source>
    </source>
</evidence>
<evidence type="ECO:0000305" key="5"/>
<evidence type="ECO:0000312" key="6">
    <source>
        <dbReference type="Araport" id="AT1G74120"/>
    </source>
</evidence>
<evidence type="ECO:0000312" key="7">
    <source>
        <dbReference type="EMBL" id="AAG51878.1"/>
    </source>
</evidence>
<evidence type="ECO:0000312" key="8">
    <source>
        <dbReference type="EMBL" id="AAG52507.1"/>
    </source>
</evidence>
<evidence type="ECO:0000312" key="9">
    <source>
        <dbReference type="EMBL" id="AEE35552.1"/>
    </source>
</evidence>
<proteinExistence type="evidence at transcript level"/>
<name>MTEFE_ARATH</name>
<sequence>MASKLKTFINLRDYPITLFNQIRSLSSRILTPINQSHYRKRILLANLLQRYGFPPSSLQHFLSRNNHLLNSDLVETEISLGILLSLKIPQKSLVSLISDCPNVLRSEFLRKWRVPLSNCGKHGVVSSSAIKSVLEHSSRIGIGPDKFNECVRVLKSLGFCDSTVSRILSSFPGVLLVNEIEIRRKIEFLVGIGIARDNIERFFHVFPEVLGIGTETRLKPLLDEFMKMGFSKDDVKKEIAREPRVLGLELGELPRCLELINTLKCREVIRVSIISEGAFRAGFEVKLRVDCLCKYGLIRRDAFKVVWKEPRVILYEIEDIEKKIEFLTNRMGFHINCLADVPEYLGVNLQKQIVPRYNVIDYLKLKGGLGCDIGLKGLIKPSMKRFYNLYVMPYPECERIFGKRKENVRVNKRHPAGLWKLMKPPSNLTTKEDVQNMKSFIESLA</sequence>
<feature type="transit peptide" description="Mitochondrion" evidence="1">
    <location>
        <begin position="1"/>
        <end position="25"/>
    </location>
</feature>
<feature type="chain" id="PRO_0000436202" description="Transcription termination factor MTERF15, mitochondrial">
    <location>
        <begin position="26"/>
        <end position="445"/>
    </location>
</feature>
<organism>
    <name type="scientific">Arabidopsis thaliana</name>
    <name type="common">Mouse-ear cress</name>
    <dbReference type="NCBI Taxonomy" id="3702"/>
    <lineage>
        <taxon>Eukaryota</taxon>
        <taxon>Viridiplantae</taxon>
        <taxon>Streptophyta</taxon>
        <taxon>Embryophyta</taxon>
        <taxon>Tracheophyta</taxon>
        <taxon>Spermatophyta</taxon>
        <taxon>Magnoliopsida</taxon>
        <taxon>eudicotyledons</taxon>
        <taxon>Gunneridae</taxon>
        <taxon>Pentapetalae</taxon>
        <taxon>rosids</taxon>
        <taxon>malvids</taxon>
        <taxon>Brassicales</taxon>
        <taxon>Brassicaceae</taxon>
        <taxon>Camelineae</taxon>
        <taxon>Arabidopsis</taxon>
    </lineage>
</organism>
<dbReference type="EMBL" id="AC016662">
    <property type="protein sequence ID" value="AAG52507.1"/>
    <property type="molecule type" value="Genomic_DNA"/>
</dbReference>
<dbReference type="EMBL" id="AC079678">
    <property type="protein sequence ID" value="AAG51878.1"/>
    <property type="molecule type" value="Genomic_DNA"/>
</dbReference>
<dbReference type="EMBL" id="CP002684">
    <property type="protein sequence ID" value="AEE35552.1"/>
    <property type="molecule type" value="Genomic_DNA"/>
</dbReference>
<dbReference type="EMBL" id="AK228001">
    <property type="protein sequence ID" value="BAE99966.1"/>
    <property type="molecule type" value="mRNA"/>
</dbReference>
<dbReference type="PIR" id="C96769">
    <property type="entry name" value="C96769"/>
</dbReference>
<dbReference type="RefSeq" id="NP_565080.1">
    <property type="nucleotide sequence ID" value="NM_106072.4"/>
</dbReference>
<dbReference type="FunCoup" id="Q9C6A1">
    <property type="interactions" value="1157"/>
</dbReference>
<dbReference type="IntAct" id="Q9C6A1">
    <property type="interactions" value="8"/>
</dbReference>
<dbReference type="STRING" id="3702.Q9C6A1"/>
<dbReference type="iPTMnet" id="Q9C6A1"/>
<dbReference type="PaxDb" id="3702-AT1G74120.1"/>
<dbReference type="ProteomicsDB" id="250982"/>
<dbReference type="EnsemblPlants" id="AT1G74120.1">
    <property type="protein sequence ID" value="AT1G74120.1"/>
    <property type="gene ID" value="AT1G74120"/>
</dbReference>
<dbReference type="GeneID" id="843752"/>
<dbReference type="Gramene" id="AT1G74120.1">
    <property type="protein sequence ID" value="AT1G74120.1"/>
    <property type="gene ID" value="AT1G74120"/>
</dbReference>
<dbReference type="KEGG" id="ath:AT1G74120"/>
<dbReference type="Araport" id="AT1G74120"/>
<dbReference type="TAIR" id="AT1G74120">
    <property type="gene designation" value="MTERF15"/>
</dbReference>
<dbReference type="eggNOG" id="KOG1267">
    <property type="taxonomic scope" value="Eukaryota"/>
</dbReference>
<dbReference type="HOGENOM" id="CLU_034145_6_0_1"/>
<dbReference type="InParanoid" id="Q9C6A1"/>
<dbReference type="OMA" id="LCKYGLI"/>
<dbReference type="OrthoDB" id="637682at2759"/>
<dbReference type="PhylomeDB" id="Q9C6A1"/>
<dbReference type="PRO" id="PR:Q9C6A1"/>
<dbReference type="Proteomes" id="UP000006548">
    <property type="component" value="Chromosome 1"/>
</dbReference>
<dbReference type="ExpressionAtlas" id="Q9C6A1">
    <property type="expression patterns" value="baseline and differential"/>
</dbReference>
<dbReference type="GO" id="GO:0005739">
    <property type="term" value="C:mitochondrion"/>
    <property type="evidence" value="ECO:0000314"/>
    <property type="project" value="UniProtKB"/>
</dbReference>
<dbReference type="GO" id="GO:0003690">
    <property type="term" value="F:double-stranded DNA binding"/>
    <property type="evidence" value="ECO:0007669"/>
    <property type="project" value="InterPro"/>
</dbReference>
<dbReference type="GO" id="GO:0003723">
    <property type="term" value="F:RNA binding"/>
    <property type="evidence" value="ECO:0000314"/>
    <property type="project" value="TAIR"/>
</dbReference>
<dbReference type="GO" id="GO:0006353">
    <property type="term" value="P:DNA-templated transcription termination"/>
    <property type="evidence" value="ECO:0007669"/>
    <property type="project" value="UniProtKB-KW"/>
</dbReference>
<dbReference type="GO" id="GO:0006355">
    <property type="term" value="P:regulation of DNA-templated transcription"/>
    <property type="evidence" value="ECO:0007669"/>
    <property type="project" value="InterPro"/>
</dbReference>
<dbReference type="GO" id="GO:0000394">
    <property type="term" value="P:RNA splicing, via endonucleolytic cleavage and ligation"/>
    <property type="evidence" value="ECO:0000315"/>
    <property type="project" value="TAIR"/>
</dbReference>
<dbReference type="Gene3D" id="1.25.70.10">
    <property type="entry name" value="Transcription termination factor 3, mitochondrial"/>
    <property type="match status" value="1"/>
</dbReference>
<dbReference type="InterPro" id="IPR003690">
    <property type="entry name" value="MTERF"/>
</dbReference>
<dbReference type="InterPro" id="IPR038538">
    <property type="entry name" value="MTERF_sf"/>
</dbReference>
<dbReference type="PANTHER" id="PTHR13068">
    <property type="entry name" value="CGI-12 PROTEIN-RELATED"/>
    <property type="match status" value="1"/>
</dbReference>
<dbReference type="PANTHER" id="PTHR13068:SF23">
    <property type="entry name" value="TRANSCRIPTION TERMINATION FACTOR MTERF15, MITOCHONDRIAL"/>
    <property type="match status" value="1"/>
</dbReference>
<dbReference type="Pfam" id="PF02536">
    <property type="entry name" value="mTERF"/>
    <property type="match status" value="2"/>
</dbReference>
<dbReference type="SMART" id="SM00733">
    <property type="entry name" value="Mterf"/>
    <property type="match status" value="5"/>
</dbReference>
<gene>
    <name evidence="4" type="primary">MTERF15</name>
    <name evidence="6 9" type="ordered locus">At1g74120</name>
    <name evidence="8" type="ORF">F2P9.1</name>
    <name evidence="7" type="ORF">F9E11.3</name>
</gene>
<keyword id="KW-0496">Mitochondrion</keyword>
<keyword id="KW-1185">Reference proteome</keyword>
<keyword id="KW-0694">RNA-binding</keyword>
<keyword id="KW-0804">Transcription</keyword>
<keyword id="KW-0805">Transcription regulation</keyword>
<keyword id="KW-0806">Transcription termination</keyword>
<keyword id="KW-0809">Transit peptide</keyword>
<reference key="1">
    <citation type="journal article" date="2000" name="Nature">
        <title>Sequence and analysis of chromosome 1 of the plant Arabidopsis thaliana.</title>
        <authorList>
            <person name="Theologis A."/>
            <person name="Ecker J.R."/>
            <person name="Palm C.J."/>
            <person name="Federspiel N.A."/>
            <person name="Kaul S."/>
            <person name="White O."/>
            <person name="Alonso J."/>
            <person name="Altafi H."/>
            <person name="Araujo R."/>
            <person name="Bowman C.L."/>
            <person name="Brooks S.Y."/>
            <person name="Buehler E."/>
            <person name="Chan A."/>
            <person name="Chao Q."/>
            <person name="Chen H."/>
            <person name="Cheuk R.F."/>
            <person name="Chin C.W."/>
            <person name="Chung M.K."/>
            <person name="Conn L."/>
            <person name="Conway A.B."/>
            <person name="Conway A.R."/>
            <person name="Creasy T.H."/>
            <person name="Dewar K."/>
            <person name="Dunn P."/>
            <person name="Etgu P."/>
            <person name="Feldblyum T.V."/>
            <person name="Feng J.-D."/>
            <person name="Fong B."/>
            <person name="Fujii C.Y."/>
            <person name="Gill J.E."/>
            <person name="Goldsmith A.D."/>
            <person name="Haas B."/>
            <person name="Hansen N.F."/>
            <person name="Hughes B."/>
            <person name="Huizar L."/>
            <person name="Hunter J.L."/>
            <person name="Jenkins J."/>
            <person name="Johnson-Hopson C."/>
            <person name="Khan S."/>
            <person name="Khaykin E."/>
            <person name="Kim C.J."/>
            <person name="Koo H.L."/>
            <person name="Kremenetskaia I."/>
            <person name="Kurtz D.B."/>
            <person name="Kwan A."/>
            <person name="Lam B."/>
            <person name="Langin-Hooper S."/>
            <person name="Lee A."/>
            <person name="Lee J.M."/>
            <person name="Lenz C.A."/>
            <person name="Li J.H."/>
            <person name="Li Y.-P."/>
            <person name="Lin X."/>
            <person name="Liu S.X."/>
            <person name="Liu Z.A."/>
            <person name="Luros J.S."/>
            <person name="Maiti R."/>
            <person name="Marziali A."/>
            <person name="Militscher J."/>
            <person name="Miranda M."/>
            <person name="Nguyen M."/>
            <person name="Nierman W.C."/>
            <person name="Osborne B.I."/>
            <person name="Pai G."/>
            <person name="Peterson J."/>
            <person name="Pham P.K."/>
            <person name="Rizzo M."/>
            <person name="Rooney T."/>
            <person name="Rowley D."/>
            <person name="Sakano H."/>
            <person name="Salzberg S.L."/>
            <person name="Schwartz J.R."/>
            <person name="Shinn P."/>
            <person name="Southwick A.M."/>
            <person name="Sun H."/>
            <person name="Tallon L.J."/>
            <person name="Tambunga G."/>
            <person name="Toriumi M.J."/>
            <person name="Town C.D."/>
            <person name="Utterback T."/>
            <person name="Van Aken S."/>
            <person name="Vaysberg M."/>
            <person name="Vysotskaia V.S."/>
            <person name="Walker M."/>
            <person name="Wu D."/>
            <person name="Yu G."/>
            <person name="Fraser C.M."/>
            <person name="Venter J.C."/>
            <person name="Davis R.W."/>
        </authorList>
    </citation>
    <scope>NUCLEOTIDE SEQUENCE [LARGE SCALE GENOMIC DNA]</scope>
    <source>
        <strain>cv. Columbia</strain>
    </source>
</reference>
<reference key="2">
    <citation type="journal article" date="2017" name="Plant J.">
        <title>Araport11: a complete reannotation of the Arabidopsis thaliana reference genome.</title>
        <authorList>
            <person name="Cheng C.Y."/>
            <person name="Krishnakumar V."/>
            <person name="Chan A.P."/>
            <person name="Thibaud-Nissen F."/>
            <person name="Schobel S."/>
            <person name="Town C.D."/>
        </authorList>
    </citation>
    <scope>GENOME REANNOTATION</scope>
    <source>
        <strain>cv. Columbia</strain>
    </source>
</reference>
<reference key="3">
    <citation type="submission" date="2006-07" db="EMBL/GenBank/DDBJ databases">
        <title>Large-scale analysis of RIKEN Arabidopsis full-length (RAFL) cDNAs.</title>
        <authorList>
            <person name="Totoki Y."/>
            <person name="Seki M."/>
            <person name="Ishida J."/>
            <person name="Nakajima M."/>
            <person name="Enju A."/>
            <person name="Kamiya A."/>
            <person name="Narusaka M."/>
            <person name="Shin-i T."/>
            <person name="Nakagawa M."/>
            <person name="Sakamoto N."/>
            <person name="Oishi K."/>
            <person name="Kohara Y."/>
            <person name="Kobayashi M."/>
            <person name="Toyoda A."/>
            <person name="Sakaki Y."/>
            <person name="Sakurai T."/>
            <person name="Iida K."/>
            <person name="Akiyama K."/>
            <person name="Satou M."/>
            <person name="Toyoda T."/>
            <person name="Konagaya A."/>
            <person name="Carninci P."/>
            <person name="Kawai J."/>
            <person name="Hayashizaki Y."/>
            <person name="Shinozaki K."/>
        </authorList>
    </citation>
    <scope>NUCLEOTIDE SEQUENCE [LARGE SCALE MRNA] OF 198-445</scope>
    <source>
        <strain>cv. Columbia</strain>
    </source>
</reference>
<reference key="4">
    <citation type="journal article" date="2011" name="Proc. Natl. Acad. Sci. U.S.A.">
        <title>Plastid gene expression and plant development require a plastidic protein of the mitochondrial transcription termination factor family.</title>
        <authorList>
            <person name="Babiychuk E."/>
            <person name="Vandepoele K."/>
            <person name="Wissing J."/>
            <person name="Garcia-Diaz M."/>
            <person name="De Rycke R."/>
            <person name="Akbari H."/>
            <person name="Joubes J."/>
            <person name="Beeckman T."/>
            <person name="Jaensch L."/>
            <person name="Frentzen M."/>
            <person name="Van Montagu M.C."/>
            <person name="Kushnir S."/>
        </authorList>
    </citation>
    <scope>SUBCELLULAR LOCATION</scope>
</reference>
<reference key="5">
    <citation type="journal article" date="2012" name="Front. Plant Sci.">
        <title>Arabidopsis thaliana mTERF proteins: evolution and functional classification.</title>
        <authorList>
            <person name="Kleine T."/>
        </authorList>
    </citation>
    <scope>GENE FAMILY</scope>
</reference>
<reference key="6">
    <citation type="journal article" date="2014" name="PLoS ONE">
        <title>Arabidopsis mTERF15 is required for mitochondrial nad2 intron 3 splicing and functional complex I activity.</title>
        <authorList>
            <person name="Hsu Y.W."/>
            <person name="Wang H.J."/>
            <person name="Hsieh M.H."/>
            <person name="Hsieh H.L."/>
            <person name="Jauh G.Y."/>
        </authorList>
    </citation>
    <scope>FUNCTION</scope>
    <scope>SUBCELLULAR LOCATION</scope>
    <scope>DISRUPTION PHENOTYPE</scope>
</reference>
<accession>Q9C6A1</accession>
<accession>Q0WSD2</accession>
<accession>Q9C9D2</accession>
<comment type="function">
    <text evidence="3">Transcription termination factor required for mitochondrial NAD2 intron 3 splicing and normal membrane respiratory chain Complex I activity. Essential for normal plant growth and development. Binds to RNA but not to double-stranded DNA.</text>
</comment>
<comment type="subcellular location">
    <subcellularLocation>
        <location evidence="2 3">Mitochondrion</location>
    </subcellularLocation>
</comment>
<comment type="disruption phenotype">
    <text evidence="3">Severe growth and developmental retardation. Dwarf plants with small organs, altered organ structure and nonviable seeds.</text>
</comment>
<comment type="similarity">
    <text evidence="5">Belongs to the mTERF family.</text>
</comment>